<reference key="1">
    <citation type="journal article" date="1991" name="Biochemistry">
        <title>Molecular cloning of putative odorant-binding and odorant-metabolizing proteins.</title>
        <authorList>
            <person name="Dear T.N."/>
            <person name="Campbell K."/>
            <person name="Rabbitts T.H."/>
        </authorList>
    </citation>
    <scope>NUCLEOTIDE SEQUENCE [MRNA]</scope>
    <source>
        <tissue>Olfactory epithelium</tissue>
    </source>
</reference>
<organism>
    <name type="scientific">Rattus norvegicus</name>
    <name type="common">Rat</name>
    <dbReference type="NCBI Taxonomy" id="10116"/>
    <lineage>
        <taxon>Eukaryota</taxon>
        <taxon>Metazoa</taxon>
        <taxon>Chordata</taxon>
        <taxon>Craniata</taxon>
        <taxon>Vertebrata</taxon>
        <taxon>Euteleostomi</taxon>
        <taxon>Mammalia</taxon>
        <taxon>Eutheria</taxon>
        <taxon>Euarchontoglires</taxon>
        <taxon>Glires</taxon>
        <taxon>Rodentia</taxon>
        <taxon>Myomorpha</taxon>
        <taxon>Muroidea</taxon>
        <taxon>Muridae</taxon>
        <taxon>Murinae</taxon>
        <taxon>Rattus</taxon>
    </lineage>
</organism>
<comment type="catalytic activity">
    <reaction>
        <text>2 glutathione + H2O2 = glutathione disulfide + 2 H2O</text>
        <dbReference type="Rhea" id="RHEA:16833"/>
        <dbReference type="ChEBI" id="CHEBI:15377"/>
        <dbReference type="ChEBI" id="CHEBI:16240"/>
        <dbReference type="ChEBI" id="CHEBI:57925"/>
        <dbReference type="ChEBI" id="CHEBI:58297"/>
        <dbReference type="EC" id="1.11.1.9"/>
    </reaction>
</comment>
<comment type="subcellular location">
    <subcellularLocation>
        <location>Secreted</location>
    </subcellularLocation>
</comment>
<comment type="tissue specificity">
    <text>Expressed in the Bowman glands.</text>
</comment>
<comment type="similarity">
    <text evidence="3">Belongs to the glutathione peroxidase family.</text>
</comment>
<sequence length="221" mass="24961">MTQQFWGPCLFSLFMAVLAQETLDPQKSKVDCNKGVAGTVYEYGANTLDGGEYVQFQQYAGKHILFVNVASFCGLTATYPELNTLQEELRPFNVSVLGFPCNQFGKQEPGKNSEILLGLKYVRPGGGFVPNFQLFEKGDVNGDNEQKVFSFLKSSCPPTSELLGSPEHLFWDPMKVHDIRWNFEKFLVGPDGAPVMRWFHQTPVRVVQSDIMEYLNQTRTQ</sequence>
<name>GPX6_RAT</name>
<keyword id="KW-0560">Oxidoreductase</keyword>
<keyword id="KW-0575">Peroxidase</keyword>
<keyword id="KW-1185">Reference proteome</keyword>
<keyword id="KW-0964">Secreted</keyword>
<keyword id="KW-0732">Signal</keyword>
<accession>Q64625</accession>
<protein>
    <recommendedName>
        <fullName>Glutathione peroxidase 6</fullName>
        <shortName>GPx-6</shortName>
        <shortName>GSHPx-6</shortName>
        <ecNumber>1.11.1.9</ecNumber>
    </recommendedName>
    <alternativeName>
        <fullName>Odorant-metabolizing protein RY2D1</fullName>
    </alternativeName>
</protein>
<proteinExistence type="evidence at transcript level"/>
<gene>
    <name type="primary">Gpx6</name>
</gene>
<feature type="signal peptide" evidence="2">
    <location>
        <begin position="1"/>
        <end position="19"/>
    </location>
</feature>
<feature type="chain" id="PRO_0000013083" description="Glutathione peroxidase 6">
    <location>
        <begin position="20"/>
        <end position="221"/>
    </location>
</feature>
<feature type="active site" evidence="1">
    <location>
        <position position="73"/>
    </location>
</feature>
<evidence type="ECO:0000250" key="1"/>
<evidence type="ECO:0000255" key="2"/>
<evidence type="ECO:0000305" key="3"/>
<dbReference type="EC" id="1.11.1.9"/>
<dbReference type="EMBL" id="M76733">
    <property type="protein sequence ID" value="AAA42094.1"/>
    <property type="molecule type" value="mRNA"/>
</dbReference>
<dbReference type="PIR" id="B40464">
    <property type="entry name" value="B40464"/>
</dbReference>
<dbReference type="RefSeq" id="NP_671694.1">
    <property type="nucleotide sequence ID" value="NM_147165.2"/>
</dbReference>
<dbReference type="SMR" id="Q64625"/>
<dbReference type="FunCoup" id="Q64625">
    <property type="interactions" value="59"/>
</dbReference>
<dbReference type="STRING" id="10116.ENSRNOP00000070683"/>
<dbReference type="PeroxiBase" id="3736">
    <property type="entry name" value="RnoGPx06"/>
</dbReference>
<dbReference type="PhosphoSitePlus" id="Q64625"/>
<dbReference type="PaxDb" id="10116-ENSRNOP00000055070"/>
<dbReference type="Ensembl" id="ENSRNOT00000082782.2">
    <property type="protein sequence ID" value="ENSRNOP00000070342.2"/>
    <property type="gene ID" value="ENSRNOG00000060749.2"/>
</dbReference>
<dbReference type="GeneID" id="259233"/>
<dbReference type="KEGG" id="rno:259233"/>
<dbReference type="UCSC" id="RGD:628789">
    <property type="organism name" value="rat"/>
</dbReference>
<dbReference type="AGR" id="RGD:628789"/>
<dbReference type="CTD" id="257202"/>
<dbReference type="RGD" id="628789">
    <property type="gene designation" value="Gpx6"/>
</dbReference>
<dbReference type="eggNOG" id="KOG1651">
    <property type="taxonomic scope" value="Eukaryota"/>
</dbReference>
<dbReference type="GeneTree" id="ENSGT00940000161098"/>
<dbReference type="InParanoid" id="Q64625"/>
<dbReference type="OMA" id="WFHRASV"/>
<dbReference type="OrthoDB" id="43434at9989"/>
<dbReference type="PhylomeDB" id="Q64625"/>
<dbReference type="Reactome" id="R-RNO-3299685">
    <property type="pathway name" value="Detoxification of Reactive Oxygen Species"/>
</dbReference>
<dbReference type="PRO" id="PR:Q64625"/>
<dbReference type="Proteomes" id="UP000002494">
    <property type="component" value="Chromosome 17"/>
</dbReference>
<dbReference type="GO" id="GO:0005576">
    <property type="term" value="C:extracellular region"/>
    <property type="evidence" value="ECO:0007669"/>
    <property type="project" value="UniProtKB-SubCell"/>
</dbReference>
<dbReference type="GO" id="GO:0004602">
    <property type="term" value="F:glutathione peroxidase activity"/>
    <property type="evidence" value="ECO:0000318"/>
    <property type="project" value="GO_Central"/>
</dbReference>
<dbReference type="GO" id="GO:0006979">
    <property type="term" value="P:response to oxidative stress"/>
    <property type="evidence" value="ECO:0007669"/>
    <property type="project" value="InterPro"/>
</dbReference>
<dbReference type="CDD" id="cd00340">
    <property type="entry name" value="GSH_Peroxidase"/>
    <property type="match status" value="1"/>
</dbReference>
<dbReference type="FunFam" id="3.40.30.10:FF:000112">
    <property type="entry name" value="Glutathione peroxidase"/>
    <property type="match status" value="1"/>
</dbReference>
<dbReference type="Gene3D" id="3.40.30.10">
    <property type="entry name" value="Glutaredoxin"/>
    <property type="match status" value="1"/>
</dbReference>
<dbReference type="InterPro" id="IPR000889">
    <property type="entry name" value="Glutathione_peroxidase"/>
</dbReference>
<dbReference type="InterPro" id="IPR029759">
    <property type="entry name" value="GPX_AS"/>
</dbReference>
<dbReference type="InterPro" id="IPR029760">
    <property type="entry name" value="GPX_CS"/>
</dbReference>
<dbReference type="InterPro" id="IPR036249">
    <property type="entry name" value="Thioredoxin-like_sf"/>
</dbReference>
<dbReference type="PANTHER" id="PTHR11592">
    <property type="entry name" value="GLUTATHIONE PEROXIDASE"/>
    <property type="match status" value="1"/>
</dbReference>
<dbReference type="PANTHER" id="PTHR11592:SF15">
    <property type="entry name" value="GLUTATHIONE PEROXIDASE 6"/>
    <property type="match status" value="1"/>
</dbReference>
<dbReference type="Pfam" id="PF00255">
    <property type="entry name" value="GSHPx"/>
    <property type="match status" value="1"/>
</dbReference>
<dbReference type="PIRSF" id="PIRSF000303">
    <property type="entry name" value="Glutathion_perox"/>
    <property type="match status" value="1"/>
</dbReference>
<dbReference type="PRINTS" id="PR01011">
    <property type="entry name" value="GLUTPROXDASE"/>
</dbReference>
<dbReference type="SUPFAM" id="SSF52833">
    <property type="entry name" value="Thioredoxin-like"/>
    <property type="match status" value="1"/>
</dbReference>
<dbReference type="PROSITE" id="PS00460">
    <property type="entry name" value="GLUTATHIONE_PEROXID_1"/>
    <property type="match status" value="1"/>
</dbReference>
<dbReference type="PROSITE" id="PS00763">
    <property type="entry name" value="GLUTATHIONE_PEROXID_2"/>
    <property type="match status" value="1"/>
</dbReference>
<dbReference type="PROSITE" id="PS51355">
    <property type="entry name" value="GLUTATHIONE_PEROXID_3"/>
    <property type="match status" value="1"/>
</dbReference>